<dbReference type="EMBL" id="AP009552">
    <property type="protein sequence ID" value="BAG01745.1"/>
    <property type="molecule type" value="Genomic_DNA"/>
</dbReference>
<dbReference type="RefSeq" id="WP_012265194.1">
    <property type="nucleotide sequence ID" value="NC_010296.1"/>
</dbReference>
<dbReference type="SMR" id="B0JXB8"/>
<dbReference type="STRING" id="449447.MAE_19230"/>
<dbReference type="PaxDb" id="449447-MAE_19230"/>
<dbReference type="EnsemblBacteria" id="BAG01745">
    <property type="protein sequence ID" value="BAG01745"/>
    <property type="gene ID" value="MAE_19230"/>
</dbReference>
<dbReference type="KEGG" id="mar:MAE_19230"/>
<dbReference type="PATRIC" id="fig|449447.4.peg.1766"/>
<dbReference type="eggNOG" id="COG3258">
    <property type="taxonomic scope" value="Bacteria"/>
</dbReference>
<dbReference type="HOGENOM" id="CLU_033498_0_0_3"/>
<dbReference type="BioCyc" id="MAER449447:MAE_RS08415-MONOMER"/>
<dbReference type="Proteomes" id="UP000001510">
    <property type="component" value="Chromosome"/>
</dbReference>
<dbReference type="GO" id="GO:0031676">
    <property type="term" value="C:plasma membrane-derived thylakoid membrane"/>
    <property type="evidence" value="ECO:0007669"/>
    <property type="project" value="UniProtKB-SubCell"/>
</dbReference>
<dbReference type="GO" id="GO:0009055">
    <property type="term" value="F:electron transfer activity"/>
    <property type="evidence" value="ECO:0007669"/>
    <property type="project" value="UniProtKB-UniRule"/>
</dbReference>
<dbReference type="GO" id="GO:0020037">
    <property type="term" value="F:heme binding"/>
    <property type="evidence" value="ECO:0007669"/>
    <property type="project" value="InterPro"/>
</dbReference>
<dbReference type="GO" id="GO:0005506">
    <property type="term" value="F:iron ion binding"/>
    <property type="evidence" value="ECO:0007669"/>
    <property type="project" value="InterPro"/>
</dbReference>
<dbReference type="GO" id="GO:0015979">
    <property type="term" value="P:photosynthesis"/>
    <property type="evidence" value="ECO:0007669"/>
    <property type="project" value="UniProtKB-UniRule"/>
</dbReference>
<dbReference type="FunFam" id="2.60.40.830:FF:000001">
    <property type="entry name" value="Cytochrome f"/>
    <property type="match status" value="1"/>
</dbReference>
<dbReference type="Gene3D" id="2.40.50.100">
    <property type="match status" value="1"/>
</dbReference>
<dbReference type="Gene3D" id="2.60.40.830">
    <property type="entry name" value="Cytochrome f large domain"/>
    <property type="match status" value="1"/>
</dbReference>
<dbReference type="Gene3D" id="1.20.5.700">
    <property type="entry name" value="Single helix bin"/>
    <property type="match status" value="1"/>
</dbReference>
<dbReference type="HAMAP" id="MF_00610">
    <property type="entry name" value="Cytb6_f_cytF"/>
    <property type="match status" value="1"/>
</dbReference>
<dbReference type="InterPro" id="IPR024058">
    <property type="entry name" value="Cyt-f_TM"/>
</dbReference>
<dbReference type="InterPro" id="IPR002325">
    <property type="entry name" value="Cyt_f"/>
</dbReference>
<dbReference type="InterPro" id="IPR024094">
    <property type="entry name" value="Cyt_f_lg_dom"/>
</dbReference>
<dbReference type="InterPro" id="IPR036826">
    <property type="entry name" value="Cyt_f_lg_dom_sf"/>
</dbReference>
<dbReference type="InterPro" id="IPR011054">
    <property type="entry name" value="Rudment_hybrid_motif"/>
</dbReference>
<dbReference type="NCBIfam" id="NF002736">
    <property type="entry name" value="PRK02693.1"/>
    <property type="match status" value="1"/>
</dbReference>
<dbReference type="PANTHER" id="PTHR33288">
    <property type="match status" value="1"/>
</dbReference>
<dbReference type="PANTHER" id="PTHR33288:SF10">
    <property type="entry name" value="CYTOCHROME F"/>
    <property type="match status" value="1"/>
</dbReference>
<dbReference type="Pfam" id="PF01333">
    <property type="entry name" value="Apocytochr_F_C"/>
    <property type="match status" value="1"/>
</dbReference>
<dbReference type="Pfam" id="PF16639">
    <property type="entry name" value="Apocytochr_F_N"/>
    <property type="match status" value="1"/>
</dbReference>
<dbReference type="PRINTS" id="PR00610">
    <property type="entry name" value="CYTOCHROMEF"/>
</dbReference>
<dbReference type="SUPFAM" id="SSF103431">
    <property type="entry name" value="Cytochrome f subunit of the cytochrome b6f complex, transmembrane anchor"/>
    <property type="match status" value="1"/>
</dbReference>
<dbReference type="SUPFAM" id="SSF49441">
    <property type="entry name" value="Cytochrome f, large domain"/>
    <property type="match status" value="1"/>
</dbReference>
<dbReference type="SUPFAM" id="SSF51246">
    <property type="entry name" value="Rudiment single hybrid motif"/>
    <property type="match status" value="1"/>
</dbReference>
<dbReference type="PROSITE" id="PS51010">
    <property type="entry name" value="CYTF"/>
    <property type="match status" value="1"/>
</dbReference>
<feature type="signal peptide" evidence="1">
    <location>
        <begin position="1"/>
        <end position="44"/>
    </location>
</feature>
<feature type="chain" id="PRO_1000082569" description="Cytochrome f">
    <location>
        <begin position="45"/>
        <end position="328"/>
    </location>
</feature>
<feature type="transmembrane region" description="Helical" evidence="1">
    <location>
        <begin position="294"/>
        <end position="314"/>
    </location>
</feature>
<feature type="binding site" description="axial binding residue" evidence="1">
    <location>
        <position position="45"/>
    </location>
    <ligand>
        <name>heme</name>
        <dbReference type="ChEBI" id="CHEBI:30413"/>
    </ligand>
    <ligandPart>
        <name>Fe</name>
        <dbReference type="ChEBI" id="CHEBI:18248"/>
    </ligandPart>
</feature>
<feature type="binding site" description="covalent" evidence="1">
    <location>
        <position position="66"/>
    </location>
    <ligand>
        <name>heme</name>
        <dbReference type="ChEBI" id="CHEBI:30413"/>
    </ligand>
</feature>
<feature type="binding site" description="covalent" evidence="1">
    <location>
        <position position="69"/>
    </location>
    <ligand>
        <name>heme</name>
        <dbReference type="ChEBI" id="CHEBI:30413"/>
    </ligand>
</feature>
<feature type="binding site" description="axial binding residue" evidence="1">
    <location>
        <position position="70"/>
    </location>
    <ligand>
        <name>heme</name>
        <dbReference type="ChEBI" id="CHEBI:30413"/>
    </ligand>
    <ligandPart>
        <name>Fe</name>
        <dbReference type="ChEBI" id="CHEBI:18248"/>
    </ligandPart>
</feature>
<accession>B0JXB8</accession>
<comment type="function">
    <text evidence="1">Component of the cytochrome b6-f complex, which mediates electron transfer between photosystem II (PSII) and photosystem I (PSI), cyclic electron flow around PSI, and state transitions.</text>
</comment>
<comment type="cofactor">
    <cofactor evidence="1">
        <name>heme</name>
        <dbReference type="ChEBI" id="CHEBI:30413"/>
    </cofactor>
    <text evidence="1">Binds 1 heme group covalently.</text>
</comment>
<comment type="subunit">
    <text evidence="1">The 4 large subunits of the cytochrome b6-f complex are cytochrome b6, subunit IV (17 kDa polypeptide, PetD), cytochrome f and the Rieske protein, while the 4 small subunits are PetG, PetL, PetM and PetN. The complex functions as a dimer.</text>
</comment>
<comment type="subcellular location">
    <subcellularLocation>
        <location evidence="1">Cellular thylakoid membrane</location>
        <topology evidence="1">Single-pass membrane protein</topology>
    </subcellularLocation>
</comment>
<comment type="similarity">
    <text evidence="1">Belongs to the cytochrome f family.</text>
</comment>
<name>CYF_MICAN</name>
<proteinExistence type="inferred from homology"/>
<evidence type="ECO:0000255" key="1">
    <source>
        <dbReference type="HAMAP-Rule" id="MF_00610"/>
    </source>
</evidence>
<reference key="1">
    <citation type="journal article" date="2007" name="DNA Res.">
        <title>Complete genomic structure of the bloom-forming toxic cyanobacterium Microcystis aeruginosa NIES-843.</title>
        <authorList>
            <person name="Kaneko T."/>
            <person name="Nakajima N."/>
            <person name="Okamoto S."/>
            <person name="Suzuki I."/>
            <person name="Tanabe Y."/>
            <person name="Tamaoki M."/>
            <person name="Nakamura Y."/>
            <person name="Kasai F."/>
            <person name="Watanabe A."/>
            <person name="Kawashima K."/>
            <person name="Kishida Y."/>
            <person name="Ono A."/>
            <person name="Shimizu Y."/>
            <person name="Takahashi C."/>
            <person name="Minami C."/>
            <person name="Fujishiro T."/>
            <person name="Kohara M."/>
            <person name="Katoh M."/>
            <person name="Nakazaki N."/>
            <person name="Nakayama S."/>
            <person name="Yamada M."/>
            <person name="Tabata S."/>
            <person name="Watanabe M.M."/>
        </authorList>
    </citation>
    <scope>NUCLEOTIDE SEQUENCE [LARGE SCALE GENOMIC DNA]</scope>
    <source>
        <strain>NIES-843 / IAM M-247</strain>
    </source>
</reference>
<keyword id="KW-0249">Electron transport</keyword>
<keyword id="KW-0349">Heme</keyword>
<keyword id="KW-0408">Iron</keyword>
<keyword id="KW-0472">Membrane</keyword>
<keyword id="KW-0479">Metal-binding</keyword>
<keyword id="KW-0602">Photosynthesis</keyword>
<keyword id="KW-0732">Signal</keyword>
<keyword id="KW-0793">Thylakoid</keyword>
<keyword id="KW-0812">Transmembrane</keyword>
<keyword id="KW-1133">Transmembrane helix</keyword>
<keyword id="KW-0813">Transport</keyword>
<organism>
    <name type="scientific">Microcystis aeruginosa (strain NIES-843 / IAM M-2473)</name>
    <dbReference type="NCBI Taxonomy" id="449447"/>
    <lineage>
        <taxon>Bacteria</taxon>
        <taxon>Bacillati</taxon>
        <taxon>Cyanobacteriota</taxon>
        <taxon>Cyanophyceae</taxon>
        <taxon>Oscillatoriophycideae</taxon>
        <taxon>Chroococcales</taxon>
        <taxon>Microcystaceae</taxon>
        <taxon>Microcystis</taxon>
    </lineage>
</organism>
<protein>
    <recommendedName>
        <fullName evidence="1">Cytochrome f</fullName>
    </recommendedName>
</protein>
<gene>
    <name evidence="1" type="primary">petA</name>
    <name type="ordered locus">MAE_19230</name>
</gene>
<sequence length="328" mass="35084">MRTFNFLSFPQVHRQALVKAVLVAIATVSLLLTSDVINPQSAQAYPFWAQQTAPETPREATGRIVCANCHLAQKPAEIEIPHSVLPDSVFEAVVKIPYDPASQQVLGDGSKGGLNVGAVLMLPDGFKIAPPDRIPEEMQEKLGGVYFQSYKEGQDNVVIVGPLPGDQYKEIVFPVLAPDPSQNKGIHFGKYAVHLGANRGRGQVYPTGEPSNNNAFKASTAGTISQISKTEAGGYEVTITSEAGPVVENIPAGPELIVSEGQAIEVGQFLTSNPNVGGFGQKDTEVVLQNPGRIKGLVLFLGGIMLCQILLVIKKKQVETVQAAEMNF</sequence>